<comment type="function">
    <text>Probably part of a binding-protein-dependent transport system for an amino acid.</text>
</comment>
<comment type="subcellular location">
    <subcellularLocation>
        <location evidence="2">Periplasm</location>
    </subcellularLocation>
</comment>
<comment type="similarity">
    <text evidence="2">Belongs to the bacterial solute-binding protein 3 family.</text>
</comment>
<gene>
    <name type="primary">patH</name>
</gene>
<evidence type="ECO:0000255" key="1"/>
<evidence type="ECO:0000305" key="2"/>
<keyword id="KW-0029">Amino-acid transport</keyword>
<keyword id="KW-0574">Periplasm</keyword>
<keyword id="KW-0732">Signal</keyword>
<keyword id="KW-0813">Transport</keyword>
<reference key="1">
    <citation type="submission" date="1995-10" db="EMBL/GenBank/DDBJ databases">
        <authorList>
            <person name="Berenstein D."/>
            <person name="Skovgaard O."/>
        </authorList>
    </citation>
    <scope>NUCLEOTIDE SEQUENCE [GENOMIC DNA]</scope>
    <source>
        <strain>ATCC 33843 / NCIMB 1871 / 392 / MAV</strain>
    </source>
</reference>
<name>PATH_VIBHA</name>
<feature type="signal peptide" evidence="1">
    <location>
        <begin position="1"/>
        <end position="21"/>
    </location>
</feature>
<feature type="chain" id="PRO_0000031771" description="Putative amino-acid ABC transporter-binding protein PatH">
    <location>
        <begin position="22"/>
        <end position="248"/>
    </location>
</feature>
<protein>
    <recommendedName>
        <fullName>Putative amino-acid ABC transporter-binding protein PatH</fullName>
    </recommendedName>
</protein>
<sequence>MKNWIKVAVAAIALSAATVQAATEVKVGMSGRYFPFTFVKQDKLQGFEVDMWDEIGKRNDYKIEYVTANFSGLFGLLETGRIDTISNQITMTDARKAKYLFADPYVVDGAQITVRKGNDSIQGVEDLAGKTVAVNLGSNFEQLLRDYDKDGKINIKTYDTGIEHDVALGRADAFIMDRLSALELIKKTGLPLQLAGEPFETIQNAWPFVDNEKGRKLQAEVNKALAEMRADGTVEKISVKWFGADITK</sequence>
<accession>P52626</accession>
<proteinExistence type="inferred from homology"/>
<dbReference type="EMBL" id="L47617">
    <property type="protein sequence ID" value="AAA78256.1"/>
    <property type="molecule type" value="Genomic_DNA"/>
</dbReference>
<dbReference type="RefSeq" id="WP_005451059.1">
    <property type="nucleotide sequence ID" value="NZ_AP031614.1"/>
</dbReference>
<dbReference type="SMR" id="P52626"/>
<dbReference type="STRING" id="669.AL538_09685"/>
<dbReference type="GeneID" id="83583388"/>
<dbReference type="OrthoDB" id="368476at2"/>
<dbReference type="GO" id="GO:0016020">
    <property type="term" value="C:membrane"/>
    <property type="evidence" value="ECO:0007669"/>
    <property type="project" value="InterPro"/>
</dbReference>
<dbReference type="GO" id="GO:0042597">
    <property type="term" value="C:periplasmic space"/>
    <property type="evidence" value="ECO:0007669"/>
    <property type="project" value="UniProtKB-SubCell"/>
</dbReference>
<dbReference type="GO" id="GO:0015276">
    <property type="term" value="F:ligand-gated monoatomic ion channel activity"/>
    <property type="evidence" value="ECO:0007669"/>
    <property type="project" value="InterPro"/>
</dbReference>
<dbReference type="GO" id="GO:0006865">
    <property type="term" value="P:amino acid transport"/>
    <property type="evidence" value="ECO:0007669"/>
    <property type="project" value="UniProtKB-KW"/>
</dbReference>
<dbReference type="CDD" id="cd13709">
    <property type="entry name" value="PBP2_YxeM"/>
    <property type="match status" value="1"/>
</dbReference>
<dbReference type="Gene3D" id="3.40.190.10">
    <property type="entry name" value="Periplasmic binding protein-like II"/>
    <property type="match status" value="2"/>
</dbReference>
<dbReference type="InterPro" id="IPR001320">
    <property type="entry name" value="Iontro_rcpt_C"/>
</dbReference>
<dbReference type="InterPro" id="IPR018313">
    <property type="entry name" value="SBP_3_CS"/>
</dbReference>
<dbReference type="InterPro" id="IPR001638">
    <property type="entry name" value="Solute-binding_3/MltF_N"/>
</dbReference>
<dbReference type="PANTHER" id="PTHR35936:SF19">
    <property type="entry name" value="AMINO-ACID-BINDING PROTEIN YXEM-RELATED"/>
    <property type="match status" value="1"/>
</dbReference>
<dbReference type="PANTHER" id="PTHR35936">
    <property type="entry name" value="MEMBRANE-BOUND LYTIC MUREIN TRANSGLYCOSYLASE F"/>
    <property type="match status" value="1"/>
</dbReference>
<dbReference type="Pfam" id="PF00497">
    <property type="entry name" value="SBP_bac_3"/>
    <property type="match status" value="1"/>
</dbReference>
<dbReference type="SMART" id="SM00062">
    <property type="entry name" value="PBPb"/>
    <property type="match status" value="1"/>
</dbReference>
<dbReference type="SMART" id="SM00079">
    <property type="entry name" value="PBPe"/>
    <property type="match status" value="1"/>
</dbReference>
<dbReference type="SUPFAM" id="SSF53850">
    <property type="entry name" value="Periplasmic binding protein-like II"/>
    <property type="match status" value="1"/>
</dbReference>
<dbReference type="PROSITE" id="PS01039">
    <property type="entry name" value="SBP_BACTERIAL_3"/>
    <property type="match status" value="1"/>
</dbReference>
<organism>
    <name type="scientific">Vibrio harveyi</name>
    <name type="common">Beneckea harveyi</name>
    <dbReference type="NCBI Taxonomy" id="669"/>
    <lineage>
        <taxon>Bacteria</taxon>
        <taxon>Pseudomonadati</taxon>
        <taxon>Pseudomonadota</taxon>
        <taxon>Gammaproteobacteria</taxon>
        <taxon>Vibrionales</taxon>
        <taxon>Vibrionaceae</taxon>
        <taxon>Vibrio</taxon>
    </lineage>
</organism>